<feature type="chain" id="PRO_0000457821" description="L-aspartate oxidase">
    <location>
        <begin position="1"/>
        <end position="544"/>
    </location>
</feature>
<feature type="active site" description="Proton donor/acceptor" evidence="1">
    <location>
        <position position="288"/>
    </location>
</feature>
<feature type="binding site" evidence="1">
    <location>
        <begin position="17"/>
        <end position="20"/>
    </location>
    <ligand>
        <name>FAD</name>
        <dbReference type="ChEBI" id="CHEBI:57692"/>
    </ligand>
</feature>
<feature type="binding site" evidence="1">
    <location>
        <position position="39"/>
    </location>
    <ligand>
        <name>FAD</name>
        <dbReference type="ChEBI" id="CHEBI:57692"/>
    </ligand>
</feature>
<feature type="binding site" evidence="1">
    <location>
        <begin position="46"/>
        <end position="53"/>
    </location>
    <ligand>
        <name>FAD</name>
        <dbReference type="ChEBI" id="CHEBI:57692"/>
    </ligand>
</feature>
<feature type="binding site" evidence="1">
    <location>
        <position position="221"/>
    </location>
    <ligand>
        <name>FAD</name>
        <dbReference type="ChEBI" id="CHEBI:57692"/>
    </ligand>
</feature>
<feature type="binding site" evidence="1">
    <location>
        <position position="373"/>
    </location>
    <ligand>
        <name>FAD</name>
        <dbReference type="ChEBI" id="CHEBI:57692"/>
    </ligand>
</feature>
<feature type="binding site" evidence="1">
    <location>
        <begin position="389"/>
        <end position="390"/>
    </location>
    <ligand>
        <name>FAD</name>
        <dbReference type="ChEBI" id="CHEBI:57692"/>
    </ligand>
</feature>
<feature type="site" description="Important in orienting the L-aspartate substrate" evidence="1">
    <location>
        <position position="118"/>
    </location>
</feature>
<reference key="1">
    <citation type="journal article" date="2004" name="Nucleic Acids Res.">
        <title>Unique features revealed by the genome sequence of Acinetobacter sp. ADP1, a versatile and naturally transformation competent bacterium.</title>
        <authorList>
            <person name="Barbe V."/>
            <person name="Vallenet D."/>
            <person name="Fonknechten N."/>
            <person name="Kreimeyer A."/>
            <person name="Oztas S."/>
            <person name="Labarre L."/>
            <person name="Cruveiller S."/>
            <person name="Robert C."/>
            <person name="Duprat S."/>
            <person name="Wincker P."/>
            <person name="Ornston L.N."/>
            <person name="Weissenbach J."/>
            <person name="Marliere P."/>
            <person name="Cohen G.N."/>
            <person name="Medigue C."/>
        </authorList>
    </citation>
    <scope>NUCLEOTIDE SEQUENCE [LARGE SCALE GENOMIC DNA]</scope>
    <source>
        <strain>ATCC 33305 / BD413 / ADP1</strain>
    </source>
</reference>
<reference key="2">
    <citation type="journal article" date="2010" name="J. Biol. Chem.">
        <title>Genomics-driven reconstruction of acinetobacter NAD metabolism: insights for antibacterial target selection.</title>
        <authorList>
            <person name="Sorci L."/>
            <person name="Blaby I."/>
            <person name="De Ingeniis J."/>
            <person name="Gerdes S."/>
            <person name="Raffaelli N."/>
            <person name="de Crecy Lagard V."/>
            <person name="Osterman A."/>
        </authorList>
    </citation>
    <scope>DISRUPTION PHENOTYPE</scope>
    <scope>PATHWAY</scope>
    <source>
        <strain>ATCC 33305 / BD413 / ADP1</strain>
    </source>
</reference>
<name>NADB_ACIAD</name>
<gene>
    <name evidence="3" type="primary">nadB</name>
    <name evidence="6" type="ordered locus">ACIAD2587</name>
</gene>
<evidence type="ECO:0000250" key="1">
    <source>
        <dbReference type="UniProtKB" id="P10902"/>
    </source>
</evidence>
<evidence type="ECO:0000269" key="2">
    <source>
    </source>
</evidence>
<evidence type="ECO:0000303" key="3">
    <source>
    </source>
</evidence>
<evidence type="ECO:0000305" key="4"/>
<evidence type="ECO:0000305" key="5">
    <source>
    </source>
</evidence>
<evidence type="ECO:0000312" key="6">
    <source>
        <dbReference type="EMBL" id="CAG69349.1"/>
    </source>
</evidence>
<accession>Q6F9B6</accession>
<dbReference type="EC" id="1.4.3.16" evidence="1"/>
<dbReference type="EMBL" id="CR543861">
    <property type="protein sequence ID" value="CAG69349.1"/>
    <property type="molecule type" value="Genomic_DNA"/>
</dbReference>
<dbReference type="SMR" id="Q6F9B6"/>
<dbReference type="STRING" id="202950.GCA_001485005_01431"/>
<dbReference type="KEGG" id="aci:ACIAD2587"/>
<dbReference type="eggNOG" id="COG0029">
    <property type="taxonomic scope" value="Bacteria"/>
</dbReference>
<dbReference type="HOGENOM" id="CLU_014312_3_0_6"/>
<dbReference type="BioCyc" id="ASP62977:ACIAD_RS11765-MONOMER"/>
<dbReference type="UniPathway" id="UPA00253">
    <property type="reaction ID" value="UER00326"/>
</dbReference>
<dbReference type="Proteomes" id="UP000000430">
    <property type="component" value="Chromosome"/>
</dbReference>
<dbReference type="GO" id="GO:0005737">
    <property type="term" value="C:cytoplasm"/>
    <property type="evidence" value="ECO:0007669"/>
    <property type="project" value="UniProtKB-SubCell"/>
</dbReference>
<dbReference type="GO" id="GO:0008734">
    <property type="term" value="F:L-aspartate oxidase activity"/>
    <property type="evidence" value="ECO:0007669"/>
    <property type="project" value="UniProtKB-EC"/>
</dbReference>
<dbReference type="GO" id="GO:0000166">
    <property type="term" value="F:nucleotide binding"/>
    <property type="evidence" value="ECO:0007669"/>
    <property type="project" value="UniProtKB-KW"/>
</dbReference>
<dbReference type="GO" id="GO:0034628">
    <property type="term" value="P:'de novo' NAD biosynthetic process from L-aspartate"/>
    <property type="evidence" value="ECO:0007669"/>
    <property type="project" value="TreeGrafter"/>
</dbReference>
<dbReference type="FunFam" id="1.20.58.100:FF:000002">
    <property type="entry name" value="L-aspartate oxidase"/>
    <property type="match status" value="1"/>
</dbReference>
<dbReference type="FunFam" id="3.90.700.10:FF:000002">
    <property type="entry name" value="L-aspartate oxidase"/>
    <property type="match status" value="1"/>
</dbReference>
<dbReference type="Gene3D" id="3.50.50.60">
    <property type="entry name" value="FAD/NAD(P)-binding domain"/>
    <property type="match status" value="1"/>
</dbReference>
<dbReference type="Gene3D" id="1.20.58.100">
    <property type="entry name" value="Fumarate reductase/succinate dehydrogenase flavoprotein-like, C-terminal domain"/>
    <property type="match status" value="1"/>
</dbReference>
<dbReference type="Gene3D" id="3.90.700.10">
    <property type="entry name" value="Succinate dehydrogenase/fumarate reductase flavoprotein, catalytic domain"/>
    <property type="match status" value="1"/>
</dbReference>
<dbReference type="InterPro" id="IPR003953">
    <property type="entry name" value="FAD-dep_OxRdtase_2_FAD-bd"/>
</dbReference>
<dbReference type="InterPro" id="IPR036188">
    <property type="entry name" value="FAD/NAD-bd_sf"/>
</dbReference>
<dbReference type="InterPro" id="IPR037099">
    <property type="entry name" value="Fum_R/Succ_DH_flav-like_C_sf"/>
</dbReference>
<dbReference type="InterPro" id="IPR015939">
    <property type="entry name" value="Fum_Rdtase/Succ_DH_flav-like_C"/>
</dbReference>
<dbReference type="InterPro" id="IPR005288">
    <property type="entry name" value="NadB"/>
</dbReference>
<dbReference type="InterPro" id="IPR027477">
    <property type="entry name" value="Succ_DH/fumarate_Rdtase_cat_sf"/>
</dbReference>
<dbReference type="NCBIfam" id="TIGR00551">
    <property type="entry name" value="nadB"/>
    <property type="match status" value="1"/>
</dbReference>
<dbReference type="NCBIfam" id="NF006567">
    <property type="entry name" value="PRK09077.1"/>
    <property type="match status" value="1"/>
</dbReference>
<dbReference type="PANTHER" id="PTHR42716">
    <property type="entry name" value="L-ASPARTATE OXIDASE"/>
    <property type="match status" value="1"/>
</dbReference>
<dbReference type="PANTHER" id="PTHR42716:SF2">
    <property type="entry name" value="L-ASPARTATE OXIDASE, CHLOROPLASTIC"/>
    <property type="match status" value="1"/>
</dbReference>
<dbReference type="Pfam" id="PF00890">
    <property type="entry name" value="FAD_binding_2"/>
    <property type="match status" value="1"/>
</dbReference>
<dbReference type="Pfam" id="PF02910">
    <property type="entry name" value="Succ_DH_flav_C"/>
    <property type="match status" value="1"/>
</dbReference>
<dbReference type="PIRSF" id="PIRSF000171">
    <property type="entry name" value="SDHA_APRA_LASPO"/>
    <property type="match status" value="1"/>
</dbReference>
<dbReference type="PRINTS" id="PR00368">
    <property type="entry name" value="FADPNR"/>
</dbReference>
<dbReference type="SUPFAM" id="SSF51905">
    <property type="entry name" value="FAD/NAD(P)-binding domain"/>
    <property type="match status" value="1"/>
</dbReference>
<dbReference type="SUPFAM" id="SSF46977">
    <property type="entry name" value="Succinate dehydrogenase/fumarate reductase flavoprotein C-terminal domain"/>
    <property type="match status" value="1"/>
</dbReference>
<dbReference type="SUPFAM" id="SSF56425">
    <property type="entry name" value="Succinate dehydrogenase/fumarate reductase flavoprotein, catalytic domain"/>
    <property type="match status" value="1"/>
</dbReference>
<organism>
    <name type="scientific">Acinetobacter baylyi (strain ATCC 33305 / BD413 / ADP1)</name>
    <dbReference type="NCBI Taxonomy" id="62977"/>
    <lineage>
        <taxon>Bacteria</taxon>
        <taxon>Pseudomonadati</taxon>
        <taxon>Pseudomonadota</taxon>
        <taxon>Gammaproteobacteria</taxon>
        <taxon>Moraxellales</taxon>
        <taxon>Moraxellaceae</taxon>
        <taxon>Acinetobacter</taxon>
    </lineage>
</organism>
<keyword id="KW-0963">Cytoplasm</keyword>
<keyword id="KW-0274">FAD</keyword>
<keyword id="KW-0285">Flavoprotein</keyword>
<keyword id="KW-0547">Nucleotide-binding</keyword>
<keyword id="KW-0560">Oxidoreductase</keyword>
<keyword id="KW-0662">Pyridine nucleotide biosynthesis</keyword>
<protein>
    <recommendedName>
        <fullName evidence="3">L-aspartate oxidase</fullName>
        <shortName evidence="1">LASPO</shortName>
        <ecNumber evidence="1">1.4.3.16</ecNumber>
    </recommendedName>
</protein>
<comment type="function">
    <text evidence="1">Catalyzes the oxidation of L-aspartate to iminoaspartate, the first step in the de novo biosynthesis of NAD(+).</text>
</comment>
<comment type="catalytic activity">
    <reaction evidence="1">
        <text>L-aspartate + O2 = iminosuccinate + H2O2</text>
        <dbReference type="Rhea" id="RHEA:25876"/>
        <dbReference type="ChEBI" id="CHEBI:15379"/>
        <dbReference type="ChEBI" id="CHEBI:16240"/>
        <dbReference type="ChEBI" id="CHEBI:29991"/>
        <dbReference type="ChEBI" id="CHEBI:77875"/>
        <dbReference type="EC" id="1.4.3.16"/>
    </reaction>
    <physiologicalReaction direction="left-to-right" evidence="1">
        <dbReference type="Rhea" id="RHEA:25877"/>
    </physiologicalReaction>
</comment>
<comment type="cofactor">
    <cofactor evidence="1">
        <name>FAD</name>
        <dbReference type="ChEBI" id="CHEBI:57692"/>
    </cofactor>
    <text evidence="1">Binds 1 FAD per subunit.</text>
</comment>
<comment type="pathway">
    <text evidence="5">Cofactor biosynthesis; NAD(+) biosynthesis; iminoaspartate from L-aspartate (oxidase route): step 1/1.</text>
</comment>
<comment type="subcellular location">
    <subcellularLocation>
        <location evidence="1">Cytoplasm</location>
    </subcellularLocation>
</comment>
<comment type="disruption phenotype">
    <text evidence="2">Knockout mutant can grow only in a minimal medium supplemented with niacin (nicotinamide or nicotinic acid).</text>
</comment>
<comment type="similarity">
    <text evidence="4">Belongs to the FAD-dependent oxidoreductase 2 family. NadB subfamily.</text>
</comment>
<proteinExistence type="inferred from homology"/>
<sequence>MSNLDSTHHFDVVIVGSGGAGLSLALSLPSHYKIAILAKSSLTEASTFYAQGGVAAVLDKTDSIQQHIDDTMIAGAHLCELDAVKQTVEGGRPSVNFLLKHGVEFTLDEDDQLHLTREGGHSQRRIIHAADATGKAISTTLVQRAKEASNLTIFENFIAIDIITLHKLGHIQQDNRAVGLYVLDEQNEKVHTFLAPFIALACGGAMKAYLYTSNPDIATGDGIAMAYRAGCRVANMEFNQFHPTCLYHPQARSFLITEAMRGEGAYLRLPDGERFMLRFDERAELAPRDIVARAIDYEIKRLGIRHVWLDITHKSAEFIQQHFPTLYTRLLELGIDITKDMIPVVPAAHYTCGGVVVNAQSQTDIEGLYAIGETSYTGLHGANRMASNSLLECFVYGLSAAEDIQQKFEQDFNLPNIPEWDDSQVTDADEDVVILQNWDELRSTMWNYVGIVRTTKRLQRALHRIEMLKREITEYYQDYRVSKNLIELRNLVLVSEMIVRCAMQRKESRGLHYTLDYPELEQQLKKTVLTPPNFEVKQIPVNTL</sequence>